<proteinExistence type="inferred from homology"/>
<keyword id="KW-0067">ATP-binding</keyword>
<keyword id="KW-0963">Cytoplasm</keyword>
<keyword id="KW-0418">Kinase</keyword>
<keyword id="KW-0547">Nucleotide-binding</keyword>
<keyword id="KW-0808">Transferase</keyword>
<comment type="catalytic activity">
    <reaction evidence="1">
        <text>CMP + ATP = CDP + ADP</text>
        <dbReference type="Rhea" id="RHEA:11600"/>
        <dbReference type="ChEBI" id="CHEBI:30616"/>
        <dbReference type="ChEBI" id="CHEBI:58069"/>
        <dbReference type="ChEBI" id="CHEBI:60377"/>
        <dbReference type="ChEBI" id="CHEBI:456216"/>
        <dbReference type="EC" id="2.7.4.25"/>
    </reaction>
</comment>
<comment type="catalytic activity">
    <reaction evidence="1">
        <text>dCMP + ATP = dCDP + ADP</text>
        <dbReference type="Rhea" id="RHEA:25094"/>
        <dbReference type="ChEBI" id="CHEBI:30616"/>
        <dbReference type="ChEBI" id="CHEBI:57566"/>
        <dbReference type="ChEBI" id="CHEBI:58593"/>
        <dbReference type="ChEBI" id="CHEBI:456216"/>
        <dbReference type="EC" id="2.7.4.25"/>
    </reaction>
</comment>
<comment type="subcellular location">
    <subcellularLocation>
        <location evidence="1">Cytoplasm</location>
    </subcellularLocation>
</comment>
<comment type="similarity">
    <text evidence="1">Belongs to the cytidylate kinase family. Type 1 subfamily.</text>
</comment>
<sequence length="232" mass="24955">MPDTTGGHPAALKVVTLDGPAGVGKTTLARRVADALGIPYLDTGAMFRTMAWRLGPDGPDLDEALLRDRLAGFIFTLRGRGGASVLSCNGEDIGNEIRTEDVGAMASRIAALPVVRECLKAAQQRMGAAQPLVVEGRDMGTVVFPGARHKFFLDAAPEIRAMRRYTQLQTMGEAHDLALLTEQIRSRDEQDRNRAVAPLRPAADAIIVDTGDLDIDGVFGVIMQHIRSRDGL</sequence>
<protein>
    <recommendedName>
        <fullName evidence="1">Cytidylate kinase</fullName>
        <shortName evidence="1">CK</shortName>
        <ecNumber evidence="1">2.7.4.25</ecNumber>
    </recommendedName>
    <alternativeName>
        <fullName evidence="1">Cytidine monophosphate kinase</fullName>
        <shortName evidence="1">CMP kinase</shortName>
    </alternativeName>
</protein>
<accession>A1VEW5</accession>
<reference key="1">
    <citation type="journal article" date="2009" name="Environ. Microbiol.">
        <title>Contribution of mobile genetic elements to Desulfovibrio vulgaris genome plasticity.</title>
        <authorList>
            <person name="Walker C.B."/>
            <person name="Stolyar S."/>
            <person name="Chivian D."/>
            <person name="Pinel N."/>
            <person name="Gabster J.A."/>
            <person name="Dehal P.S."/>
            <person name="He Z."/>
            <person name="Yang Z.K."/>
            <person name="Yen H.C."/>
            <person name="Zhou J."/>
            <person name="Wall J.D."/>
            <person name="Hazen T.C."/>
            <person name="Arkin A.P."/>
            <person name="Stahl D.A."/>
        </authorList>
    </citation>
    <scope>NUCLEOTIDE SEQUENCE [LARGE SCALE GENOMIC DNA]</scope>
    <source>
        <strain>DP4</strain>
    </source>
</reference>
<dbReference type="EC" id="2.7.4.25" evidence="1"/>
<dbReference type="EMBL" id="CP000527">
    <property type="protein sequence ID" value="ABM28981.1"/>
    <property type="molecule type" value="Genomic_DNA"/>
</dbReference>
<dbReference type="RefSeq" id="WP_011792576.1">
    <property type="nucleotide sequence ID" value="NC_008751.1"/>
</dbReference>
<dbReference type="SMR" id="A1VEW5"/>
<dbReference type="KEGG" id="dvl:Dvul_1965"/>
<dbReference type="HOGENOM" id="CLU_079959_0_0_7"/>
<dbReference type="Proteomes" id="UP000009173">
    <property type="component" value="Chromosome"/>
</dbReference>
<dbReference type="GO" id="GO:0005829">
    <property type="term" value="C:cytosol"/>
    <property type="evidence" value="ECO:0007669"/>
    <property type="project" value="TreeGrafter"/>
</dbReference>
<dbReference type="GO" id="GO:0005524">
    <property type="term" value="F:ATP binding"/>
    <property type="evidence" value="ECO:0007669"/>
    <property type="project" value="UniProtKB-UniRule"/>
</dbReference>
<dbReference type="GO" id="GO:0036430">
    <property type="term" value="F:CMP kinase activity"/>
    <property type="evidence" value="ECO:0007669"/>
    <property type="project" value="RHEA"/>
</dbReference>
<dbReference type="GO" id="GO:0036431">
    <property type="term" value="F:dCMP kinase activity"/>
    <property type="evidence" value="ECO:0007669"/>
    <property type="project" value="RHEA"/>
</dbReference>
<dbReference type="GO" id="GO:0015949">
    <property type="term" value="P:nucleobase-containing small molecule interconversion"/>
    <property type="evidence" value="ECO:0007669"/>
    <property type="project" value="TreeGrafter"/>
</dbReference>
<dbReference type="GO" id="GO:0006220">
    <property type="term" value="P:pyrimidine nucleotide metabolic process"/>
    <property type="evidence" value="ECO:0007669"/>
    <property type="project" value="UniProtKB-UniRule"/>
</dbReference>
<dbReference type="CDD" id="cd02020">
    <property type="entry name" value="CMPK"/>
    <property type="match status" value="1"/>
</dbReference>
<dbReference type="Gene3D" id="3.40.50.300">
    <property type="entry name" value="P-loop containing nucleotide triphosphate hydrolases"/>
    <property type="match status" value="1"/>
</dbReference>
<dbReference type="HAMAP" id="MF_00238">
    <property type="entry name" value="Cytidyl_kinase_type1"/>
    <property type="match status" value="1"/>
</dbReference>
<dbReference type="InterPro" id="IPR003136">
    <property type="entry name" value="Cytidylate_kin"/>
</dbReference>
<dbReference type="InterPro" id="IPR011994">
    <property type="entry name" value="Cytidylate_kinase_dom"/>
</dbReference>
<dbReference type="InterPro" id="IPR027417">
    <property type="entry name" value="P-loop_NTPase"/>
</dbReference>
<dbReference type="NCBIfam" id="TIGR00017">
    <property type="entry name" value="cmk"/>
    <property type="match status" value="1"/>
</dbReference>
<dbReference type="PANTHER" id="PTHR21299:SF2">
    <property type="entry name" value="CYTIDYLATE KINASE"/>
    <property type="match status" value="1"/>
</dbReference>
<dbReference type="PANTHER" id="PTHR21299">
    <property type="entry name" value="CYTIDYLATE KINASE/PANTOATE-BETA-ALANINE LIGASE"/>
    <property type="match status" value="1"/>
</dbReference>
<dbReference type="Pfam" id="PF02224">
    <property type="entry name" value="Cytidylate_kin"/>
    <property type="match status" value="1"/>
</dbReference>
<dbReference type="SUPFAM" id="SSF52540">
    <property type="entry name" value="P-loop containing nucleoside triphosphate hydrolases"/>
    <property type="match status" value="1"/>
</dbReference>
<feature type="chain" id="PRO_1000048216" description="Cytidylate kinase">
    <location>
        <begin position="1"/>
        <end position="232"/>
    </location>
</feature>
<feature type="binding site" evidence="1">
    <location>
        <begin position="19"/>
        <end position="27"/>
    </location>
    <ligand>
        <name>ATP</name>
        <dbReference type="ChEBI" id="CHEBI:30616"/>
    </ligand>
</feature>
<evidence type="ECO:0000255" key="1">
    <source>
        <dbReference type="HAMAP-Rule" id="MF_00238"/>
    </source>
</evidence>
<organism>
    <name type="scientific">Nitratidesulfovibrio vulgaris (strain DP4)</name>
    <name type="common">Desulfovibrio vulgaris</name>
    <dbReference type="NCBI Taxonomy" id="391774"/>
    <lineage>
        <taxon>Bacteria</taxon>
        <taxon>Pseudomonadati</taxon>
        <taxon>Thermodesulfobacteriota</taxon>
        <taxon>Desulfovibrionia</taxon>
        <taxon>Desulfovibrionales</taxon>
        <taxon>Desulfovibrionaceae</taxon>
        <taxon>Nitratidesulfovibrio</taxon>
    </lineage>
</organism>
<gene>
    <name evidence="1" type="primary">cmk</name>
    <name type="ordered locus">Dvul_1965</name>
</gene>
<name>KCY_NITV4</name>